<name>TATB_STRAW</name>
<keyword id="KW-1003">Cell membrane</keyword>
<keyword id="KW-0472">Membrane</keyword>
<keyword id="KW-0653">Protein transport</keyword>
<keyword id="KW-1185">Reference proteome</keyword>
<keyword id="KW-0811">Translocation</keyword>
<keyword id="KW-0812">Transmembrane</keyword>
<keyword id="KW-1133">Transmembrane helix</keyword>
<keyword id="KW-0813">Transport</keyword>
<sequence length="148" mass="16591">MFNDIGPLELVTLVVLAVLVFGPDKLPKMIQDVTRTIRKIREFSESAKQDIREELGPEFKDFEFEDLNPKTFIRKQLDNDELGLKEIRNGFDLKKEMAEVTDAVHGRESETSASSSSANGSAGGTVDMTKKREQLEADERPPFDADAT</sequence>
<reference key="1">
    <citation type="journal article" date="2001" name="Proc. Natl. Acad. Sci. U.S.A.">
        <title>Genome sequence of an industrial microorganism Streptomyces avermitilis: deducing the ability of producing secondary metabolites.</title>
        <authorList>
            <person name="Omura S."/>
            <person name="Ikeda H."/>
            <person name="Ishikawa J."/>
            <person name="Hanamoto A."/>
            <person name="Takahashi C."/>
            <person name="Shinose M."/>
            <person name="Takahashi Y."/>
            <person name="Horikawa H."/>
            <person name="Nakazawa H."/>
            <person name="Osonoe T."/>
            <person name="Kikuchi H."/>
            <person name="Shiba T."/>
            <person name="Sakaki Y."/>
            <person name="Hattori M."/>
        </authorList>
    </citation>
    <scope>NUCLEOTIDE SEQUENCE [LARGE SCALE GENOMIC DNA]</scope>
    <source>
        <strain>ATCC 31267 / DSM 46492 / JCM 5070 / NBRC 14893 / NCIMB 12804 / NRRL 8165 / MA-4680</strain>
    </source>
</reference>
<reference key="2">
    <citation type="journal article" date="2003" name="Nat. Biotechnol.">
        <title>Complete genome sequence and comparative analysis of the industrial microorganism Streptomyces avermitilis.</title>
        <authorList>
            <person name="Ikeda H."/>
            <person name="Ishikawa J."/>
            <person name="Hanamoto A."/>
            <person name="Shinose M."/>
            <person name="Kikuchi H."/>
            <person name="Shiba T."/>
            <person name="Sakaki Y."/>
            <person name="Hattori M."/>
            <person name="Omura S."/>
        </authorList>
    </citation>
    <scope>NUCLEOTIDE SEQUENCE [LARGE SCALE GENOMIC DNA]</scope>
    <source>
        <strain>ATCC 31267 / DSM 46492 / JCM 5070 / NBRC 14893 / NCIMB 12804 / NRRL 8165 / MA-4680</strain>
    </source>
</reference>
<dbReference type="EMBL" id="BA000030">
    <property type="protein sequence ID" value="BAC70825.1"/>
    <property type="molecule type" value="Genomic_DNA"/>
</dbReference>
<dbReference type="RefSeq" id="WP_010984544.1">
    <property type="nucleotide sequence ID" value="NZ_JZJK01000090.1"/>
</dbReference>
<dbReference type="SMR" id="Q82IL9"/>
<dbReference type="GeneID" id="41540193"/>
<dbReference type="KEGG" id="sma:SAVERM_3114"/>
<dbReference type="eggNOG" id="COG1826">
    <property type="taxonomic scope" value="Bacteria"/>
</dbReference>
<dbReference type="HOGENOM" id="CLU_086034_2_1_11"/>
<dbReference type="OrthoDB" id="3267321at2"/>
<dbReference type="Proteomes" id="UP000000428">
    <property type="component" value="Chromosome"/>
</dbReference>
<dbReference type="GO" id="GO:0033281">
    <property type="term" value="C:TAT protein transport complex"/>
    <property type="evidence" value="ECO:0007669"/>
    <property type="project" value="UniProtKB-UniRule"/>
</dbReference>
<dbReference type="GO" id="GO:0008320">
    <property type="term" value="F:protein transmembrane transporter activity"/>
    <property type="evidence" value="ECO:0007669"/>
    <property type="project" value="UniProtKB-UniRule"/>
</dbReference>
<dbReference type="GO" id="GO:0043953">
    <property type="term" value="P:protein transport by the Tat complex"/>
    <property type="evidence" value="ECO:0007669"/>
    <property type="project" value="UniProtKB-UniRule"/>
</dbReference>
<dbReference type="Gene3D" id="1.20.5.3310">
    <property type="match status" value="1"/>
</dbReference>
<dbReference type="HAMAP" id="MF_00237">
    <property type="entry name" value="TatB"/>
    <property type="match status" value="1"/>
</dbReference>
<dbReference type="InterPro" id="IPR003369">
    <property type="entry name" value="TatA/B/E"/>
</dbReference>
<dbReference type="InterPro" id="IPR018448">
    <property type="entry name" value="TatB"/>
</dbReference>
<dbReference type="NCBIfam" id="NF002374">
    <property type="entry name" value="PRK01371.1-1"/>
    <property type="match status" value="1"/>
</dbReference>
<dbReference type="NCBIfam" id="NF002377">
    <property type="entry name" value="PRK01371.1-4"/>
    <property type="match status" value="1"/>
</dbReference>
<dbReference type="Pfam" id="PF02416">
    <property type="entry name" value="TatA_B_E"/>
    <property type="match status" value="1"/>
</dbReference>
<dbReference type="PRINTS" id="PR01506">
    <property type="entry name" value="TATBPROTEIN"/>
</dbReference>
<protein>
    <recommendedName>
        <fullName evidence="1">Sec-independent protein translocase protein TatB</fullName>
    </recommendedName>
</protein>
<organism>
    <name type="scientific">Streptomyces avermitilis (strain ATCC 31267 / DSM 46492 / JCM 5070 / NBRC 14893 / NCIMB 12804 / NRRL 8165 / MA-4680)</name>
    <dbReference type="NCBI Taxonomy" id="227882"/>
    <lineage>
        <taxon>Bacteria</taxon>
        <taxon>Bacillati</taxon>
        <taxon>Actinomycetota</taxon>
        <taxon>Actinomycetes</taxon>
        <taxon>Kitasatosporales</taxon>
        <taxon>Streptomycetaceae</taxon>
        <taxon>Streptomyces</taxon>
    </lineage>
</organism>
<gene>
    <name evidence="1" type="primary">tatB</name>
    <name type="ordered locus">SAV_3114</name>
</gene>
<accession>Q82IL9</accession>
<proteinExistence type="inferred from homology"/>
<comment type="function">
    <text evidence="1">Part of the twin-arginine translocation (Tat) system that transports large folded proteins containing a characteristic twin-arginine motif in their signal peptide across membranes. Together with TatC, TatB is part of a receptor directly interacting with Tat signal peptides. TatB may form an oligomeric binding site that transiently accommodates folded Tat precursor proteins before their translocation.</text>
</comment>
<comment type="subunit">
    <text evidence="1">The Tat system comprises two distinct complexes: a TatABC complex, containing multiple copies of TatA, TatB and TatC subunits, and a separate TatA complex, containing only TatA subunits. Substrates initially bind to the TatABC complex, which probably triggers association of the separate TatA complex to form the active translocon.</text>
</comment>
<comment type="subcellular location">
    <subcellularLocation>
        <location evidence="1">Cell membrane</location>
        <topology evidence="1">Single-pass membrane protein</topology>
    </subcellularLocation>
</comment>
<comment type="similarity">
    <text evidence="1">Belongs to the TatB family.</text>
</comment>
<evidence type="ECO:0000255" key="1">
    <source>
        <dbReference type="HAMAP-Rule" id="MF_00237"/>
    </source>
</evidence>
<evidence type="ECO:0000256" key="2">
    <source>
        <dbReference type="SAM" id="MobiDB-lite"/>
    </source>
</evidence>
<feature type="chain" id="PRO_0000301244" description="Sec-independent protein translocase protein TatB">
    <location>
        <begin position="1"/>
        <end position="148"/>
    </location>
</feature>
<feature type="transmembrane region" description="Helical" evidence="1">
    <location>
        <begin position="2"/>
        <end position="22"/>
    </location>
</feature>
<feature type="region of interest" description="Disordered" evidence="2">
    <location>
        <begin position="100"/>
        <end position="148"/>
    </location>
</feature>
<feature type="compositionally biased region" description="Basic and acidic residues" evidence="2">
    <location>
        <begin position="100"/>
        <end position="110"/>
    </location>
</feature>
<feature type="compositionally biased region" description="Basic and acidic residues" evidence="2">
    <location>
        <begin position="128"/>
        <end position="148"/>
    </location>
</feature>